<name>DNJA2_RAT</name>
<dbReference type="EMBL" id="U95727">
    <property type="protein sequence ID" value="AAB64094.1"/>
    <property type="molecule type" value="mRNA"/>
</dbReference>
<dbReference type="SMR" id="O35824"/>
<dbReference type="FunCoup" id="O35824">
    <property type="interactions" value="2950"/>
</dbReference>
<dbReference type="IntAct" id="O35824">
    <property type="interactions" value="3"/>
</dbReference>
<dbReference type="MINT" id="O35824"/>
<dbReference type="STRING" id="10116.ENSRNOP00000022573"/>
<dbReference type="iPTMnet" id="O35824"/>
<dbReference type="PhosphoSitePlus" id="O35824"/>
<dbReference type="SwissPalm" id="O35824"/>
<dbReference type="jPOST" id="O35824"/>
<dbReference type="PaxDb" id="10116-ENSRNOP00000022573"/>
<dbReference type="AGR" id="RGD:71001"/>
<dbReference type="RGD" id="71001">
    <property type="gene designation" value="Dnaja2"/>
</dbReference>
<dbReference type="eggNOG" id="KOG0712">
    <property type="taxonomic scope" value="Eukaryota"/>
</dbReference>
<dbReference type="InParanoid" id="O35824"/>
<dbReference type="PhylomeDB" id="O35824"/>
<dbReference type="Reactome" id="R-RNO-3371497">
    <property type="pathway name" value="HSP90 chaperone cycle for steroid hormone receptors (SHR) in the presence of ligand"/>
</dbReference>
<dbReference type="PRO" id="PR:O35824"/>
<dbReference type="Proteomes" id="UP000002494">
    <property type="component" value="Unplaced"/>
</dbReference>
<dbReference type="GO" id="GO:0005737">
    <property type="term" value="C:cytoplasm"/>
    <property type="evidence" value="ECO:0000318"/>
    <property type="project" value="GO_Central"/>
</dbReference>
<dbReference type="GO" id="GO:0005829">
    <property type="term" value="C:cytosol"/>
    <property type="evidence" value="ECO:0000266"/>
    <property type="project" value="RGD"/>
</dbReference>
<dbReference type="GO" id="GO:0016020">
    <property type="term" value="C:membrane"/>
    <property type="evidence" value="ECO:0007669"/>
    <property type="project" value="UniProtKB-SubCell"/>
</dbReference>
<dbReference type="GO" id="GO:0005524">
    <property type="term" value="F:ATP binding"/>
    <property type="evidence" value="ECO:0007669"/>
    <property type="project" value="InterPro"/>
</dbReference>
<dbReference type="GO" id="GO:0001671">
    <property type="term" value="F:ATPase activator activity"/>
    <property type="evidence" value="ECO:0000250"/>
    <property type="project" value="UniProtKB"/>
</dbReference>
<dbReference type="GO" id="GO:0030544">
    <property type="term" value="F:Hsp70 protein binding"/>
    <property type="evidence" value="ECO:0007669"/>
    <property type="project" value="InterPro"/>
</dbReference>
<dbReference type="GO" id="GO:0051087">
    <property type="term" value="F:protein-folding chaperone binding"/>
    <property type="evidence" value="ECO:0000266"/>
    <property type="project" value="RGD"/>
</dbReference>
<dbReference type="GO" id="GO:0051082">
    <property type="term" value="F:unfolded protein binding"/>
    <property type="evidence" value="ECO:0000266"/>
    <property type="project" value="RGD"/>
</dbReference>
<dbReference type="GO" id="GO:0008270">
    <property type="term" value="F:zinc ion binding"/>
    <property type="evidence" value="ECO:0007669"/>
    <property type="project" value="UniProtKB-KW"/>
</dbReference>
<dbReference type="GO" id="GO:0018885">
    <property type="term" value="P:carbon tetrachloride metabolic process"/>
    <property type="evidence" value="ECO:0000270"/>
    <property type="project" value="RGD"/>
</dbReference>
<dbReference type="GO" id="GO:0042026">
    <property type="term" value="P:protein refolding"/>
    <property type="evidence" value="ECO:0000266"/>
    <property type="project" value="RGD"/>
</dbReference>
<dbReference type="GO" id="GO:0009408">
    <property type="term" value="P:response to heat"/>
    <property type="evidence" value="ECO:0007669"/>
    <property type="project" value="InterPro"/>
</dbReference>
<dbReference type="CDD" id="cd06257">
    <property type="entry name" value="DnaJ"/>
    <property type="match status" value="1"/>
</dbReference>
<dbReference type="CDD" id="cd10747">
    <property type="entry name" value="DnaJ_C"/>
    <property type="match status" value="1"/>
</dbReference>
<dbReference type="CDD" id="cd10719">
    <property type="entry name" value="DnaJ_zf"/>
    <property type="match status" value="1"/>
</dbReference>
<dbReference type="FunFam" id="2.60.260.20:FF:000068">
    <property type="entry name" value="Chaperone protein dnaJ 3"/>
    <property type="match status" value="1"/>
</dbReference>
<dbReference type="FunFam" id="1.10.287.110:FF:000016">
    <property type="entry name" value="DnaJ (Hsp40) homolog, subfamily A, member 2"/>
    <property type="match status" value="1"/>
</dbReference>
<dbReference type="FunFam" id="2.10.230.10:FF:000005">
    <property type="entry name" value="DnaJ homolog subfamily A member 1"/>
    <property type="match status" value="1"/>
</dbReference>
<dbReference type="FunFam" id="2.60.260.20:FF:000003">
    <property type="entry name" value="DnaJ subfamily A member 2"/>
    <property type="match status" value="1"/>
</dbReference>
<dbReference type="Gene3D" id="1.10.287.110">
    <property type="entry name" value="DnaJ domain"/>
    <property type="match status" value="1"/>
</dbReference>
<dbReference type="Gene3D" id="2.10.230.10">
    <property type="entry name" value="Heat shock protein DnaJ, cysteine-rich domain"/>
    <property type="match status" value="1"/>
</dbReference>
<dbReference type="Gene3D" id="2.60.260.20">
    <property type="entry name" value="Urease metallochaperone UreE, N-terminal domain"/>
    <property type="match status" value="2"/>
</dbReference>
<dbReference type="HAMAP" id="MF_01152">
    <property type="entry name" value="DnaJ"/>
    <property type="match status" value="1"/>
</dbReference>
<dbReference type="InterPro" id="IPR012724">
    <property type="entry name" value="DnaJ"/>
</dbReference>
<dbReference type="InterPro" id="IPR002939">
    <property type="entry name" value="DnaJ_C"/>
</dbReference>
<dbReference type="InterPro" id="IPR001623">
    <property type="entry name" value="DnaJ_domain"/>
</dbReference>
<dbReference type="InterPro" id="IPR018253">
    <property type="entry name" value="DnaJ_domain_CS"/>
</dbReference>
<dbReference type="InterPro" id="IPR044713">
    <property type="entry name" value="DNJA1/2-like"/>
</dbReference>
<dbReference type="InterPro" id="IPR008971">
    <property type="entry name" value="HSP40/DnaJ_pept-bd"/>
</dbReference>
<dbReference type="InterPro" id="IPR001305">
    <property type="entry name" value="HSP_DnaJ_Cys-rich_dom"/>
</dbReference>
<dbReference type="InterPro" id="IPR036410">
    <property type="entry name" value="HSP_DnaJ_Cys-rich_dom_sf"/>
</dbReference>
<dbReference type="InterPro" id="IPR036869">
    <property type="entry name" value="J_dom_sf"/>
</dbReference>
<dbReference type="PANTHER" id="PTHR43888">
    <property type="entry name" value="DNAJ-LIKE-2, ISOFORM A-RELATED"/>
    <property type="match status" value="1"/>
</dbReference>
<dbReference type="Pfam" id="PF00226">
    <property type="entry name" value="DnaJ"/>
    <property type="match status" value="1"/>
</dbReference>
<dbReference type="Pfam" id="PF01556">
    <property type="entry name" value="DnaJ_C"/>
    <property type="match status" value="1"/>
</dbReference>
<dbReference type="Pfam" id="PF00684">
    <property type="entry name" value="DnaJ_CXXCXGXG"/>
    <property type="match status" value="1"/>
</dbReference>
<dbReference type="PRINTS" id="PR00625">
    <property type="entry name" value="JDOMAIN"/>
</dbReference>
<dbReference type="SMART" id="SM00271">
    <property type="entry name" value="DnaJ"/>
    <property type="match status" value="1"/>
</dbReference>
<dbReference type="SUPFAM" id="SSF46565">
    <property type="entry name" value="Chaperone J-domain"/>
    <property type="match status" value="1"/>
</dbReference>
<dbReference type="SUPFAM" id="SSF57938">
    <property type="entry name" value="DnaJ/Hsp40 cysteine-rich domain"/>
    <property type="match status" value="1"/>
</dbReference>
<dbReference type="SUPFAM" id="SSF49493">
    <property type="entry name" value="HSP40/DnaJ peptide-binding domain"/>
    <property type="match status" value="2"/>
</dbReference>
<dbReference type="PROSITE" id="PS00636">
    <property type="entry name" value="DNAJ_1"/>
    <property type="match status" value="1"/>
</dbReference>
<dbReference type="PROSITE" id="PS50076">
    <property type="entry name" value="DNAJ_2"/>
    <property type="match status" value="1"/>
</dbReference>
<dbReference type="PROSITE" id="PS51188">
    <property type="entry name" value="ZF_CR"/>
    <property type="match status" value="1"/>
</dbReference>
<gene>
    <name type="primary">Dnaja2</name>
</gene>
<protein>
    <recommendedName>
        <fullName>DnaJ homolog subfamily A member 2</fullName>
    </recommendedName>
    <alternativeName>
        <fullName>RDJ2</fullName>
    </alternativeName>
</protein>
<reference key="1">
    <citation type="journal article" date="1997" name="Arch. Biochem. Biophys.">
        <title>Expression cloning of a novel farnesylated protein, RDJ2, encoding a DnaJ protein homologue.</title>
        <authorList>
            <person name="Andres D.A."/>
            <person name="Shao H."/>
            <person name="Crick D.C."/>
            <person name="Finlin B.S."/>
        </authorList>
    </citation>
    <scope>NUCLEOTIDE SEQUENCE [MRNA]</scope>
</reference>
<reference key="2">
    <citation type="journal article" date="2012" name="Nat. Commun.">
        <title>Quantitative maps of protein phosphorylation sites across 14 different rat organs and tissues.</title>
        <authorList>
            <person name="Lundby A."/>
            <person name="Secher A."/>
            <person name="Lage K."/>
            <person name="Nordsborg N.B."/>
            <person name="Dmytriyev A."/>
            <person name="Lundby C."/>
            <person name="Olsen J.V."/>
        </authorList>
    </citation>
    <scope>PHOSPHORYLATION [LARGE SCALE ANALYSIS] AT SER-123</scope>
    <scope>IDENTIFICATION BY MASS SPECTROMETRY [LARGE SCALE ANALYSIS]</scope>
</reference>
<keyword id="KW-0007">Acetylation</keyword>
<keyword id="KW-0143">Chaperone</keyword>
<keyword id="KW-1017">Isopeptide bond</keyword>
<keyword id="KW-0449">Lipoprotein</keyword>
<keyword id="KW-0472">Membrane</keyword>
<keyword id="KW-0479">Metal-binding</keyword>
<keyword id="KW-0488">Methylation</keyword>
<keyword id="KW-0597">Phosphoprotein</keyword>
<keyword id="KW-0636">Prenylation</keyword>
<keyword id="KW-1185">Reference proteome</keyword>
<keyword id="KW-0677">Repeat</keyword>
<keyword id="KW-0832">Ubl conjugation</keyword>
<keyword id="KW-0862">Zinc</keyword>
<keyword id="KW-0863">Zinc-finger</keyword>
<accession>O35824</accession>
<evidence type="ECO:0000250" key="1"/>
<evidence type="ECO:0000250" key="2">
    <source>
        <dbReference type="UniProtKB" id="O60884"/>
    </source>
</evidence>
<evidence type="ECO:0000250" key="3">
    <source>
        <dbReference type="UniProtKB" id="Q9QYJ0"/>
    </source>
</evidence>
<evidence type="ECO:0000256" key="4">
    <source>
        <dbReference type="SAM" id="MobiDB-lite"/>
    </source>
</evidence>
<evidence type="ECO:0000305" key="5"/>
<evidence type="ECO:0007744" key="6">
    <source>
    </source>
</evidence>
<comment type="function">
    <text evidence="2">Co-chaperone of Hsc70. Stimulates ATP hydrolysis and the folding of unfolded proteins mediated by HSPA1A/B (in vitro).</text>
</comment>
<comment type="subcellular location">
    <subcellularLocation>
        <location evidence="5">Membrane</location>
        <topology evidence="5">Lipid-anchor</topology>
    </subcellularLocation>
</comment>
<organism>
    <name type="scientific">Rattus norvegicus</name>
    <name type="common">Rat</name>
    <dbReference type="NCBI Taxonomy" id="10116"/>
    <lineage>
        <taxon>Eukaryota</taxon>
        <taxon>Metazoa</taxon>
        <taxon>Chordata</taxon>
        <taxon>Craniata</taxon>
        <taxon>Vertebrata</taxon>
        <taxon>Euteleostomi</taxon>
        <taxon>Mammalia</taxon>
        <taxon>Eutheria</taxon>
        <taxon>Euarchontoglires</taxon>
        <taxon>Glires</taxon>
        <taxon>Rodentia</taxon>
        <taxon>Myomorpha</taxon>
        <taxon>Muroidea</taxon>
        <taxon>Muridae</taxon>
        <taxon>Murinae</taxon>
        <taxon>Rattus</taxon>
    </lineage>
</organism>
<proteinExistence type="evidence at protein level"/>
<sequence>MANVADTKLYDILGVPPGASENELKKAYRKLAKEYHPDKNPNAGDKFKEISFAYEVLSNPEKRELYDRYGEQGLREGSGGGGGMDDIFSHIFGGGLFGFMGNQSRSRNGRRRGEDMMHPLKVSLEDLYNGKTTKLQLSKNVLCSACSGQGGKSGAVQKCSACRGRGVRIMIRQLAPGMVQQMQSVCSDCNGEGEVINEKDRCKKCEGKKVIKEVKILEVHVDKGMKHGQRITFTGEADQAPGVEPGDIVLFVQEKEHEVFQRDGNDLHMTYKIGLVEALCGFQFTFKHLDARQIVVKYPPGKVIEPGCVRVVRGEGMPQYRNPFEKGDLYIKFDVQFPENNWINPDKLSELEDLLPSRPEVPNVIGETEEVELQEFDSTRGSGGGQRREAYNDSSDEESSSHHGPGVQCAHQ</sequence>
<feature type="chain" id="PRO_0000071013" description="DnaJ homolog subfamily A member 2">
    <location>
        <begin position="1"/>
        <end position="409"/>
    </location>
</feature>
<feature type="propeptide" id="PRO_0000396759" description="Removed in mature form" evidence="1">
    <location>
        <begin position="410"/>
        <end position="412"/>
    </location>
</feature>
<feature type="domain" description="J">
    <location>
        <begin position="8"/>
        <end position="70"/>
    </location>
</feature>
<feature type="repeat" description="CXXCXGXG motif">
    <location>
        <begin position="143"/>
        <end position="150"/>
    </location>
</feature>
<feature type="repeat" description="CXXCXGXG motif">
    <location>
        <begin position="159"/>
        <end position="166"/>
    </location>
</feature>
<feature type="repeat" description="CXXCXGXG motif">
    <location>
        <begin position="186"/>
        <end position="193"/>
    </location>
</feature>
<feature type="repeat" description="CXXCXGXG motif">
    <location>
        <begin position="202"/>
        <end position="209"/>
    </location>
</feature>
<feature type="zinc finger region" description="CR-type">
    <location>
        <begin position="130"/>
        <end position="214"/>
    </location>
</feature>
<feature type="region of interest" description="Disordered" evidence="4">
    <location>
        <begin position="365"/>
        <end position="412"/>
    </location>
</feature>
<feature type="binding site" evidence="1">
    <location>
        <position position="143"/>
    </location>
    <ligand>
        <name>Zn(2+)</name>
        <dbReference type="ChEBI" id="CHEBI:29105"/>
        <label>1</label>
    </ligand>
</feature>
<feature type="binding site" evidence="1">
    <location>
        <position position="146"/>
    </location>
    <ligand>
        <name>Zn(2+)</name>
        <dbReference type="ChEBI" id="CHEBI:29105"/>
        <label>1</label>
    </ligand>
</feature>
<feature type="binding site" evidence="1">
    <location>
        <position position="159"/>
    </location>
    <ligand>
        <name>Zn(2+)</name>
        <dbReference type="ChEBI" id="CHEBI:29105"/>
        <label>2</label>
    </ligand>
</feature>
<feature type="binding site" evidence="1">
    <location>
        <position position="162"/>
    </location>
    <ligand>
        <name>Zn(2+)</name>
        <dbReference type="ChEBI" id="CHEBI:29105"/>
        <label>2</label>
    </ligand>
</feature>
<feature type="binding site" evidence="1">
    <location>
        <position position="186"/>
    </location>
    <ligand>
        <name>Zn(2+)</name>
        <dbReference type="ChEBI" id="CHEBI:29105"/>
        <label>2</label>
    </ligand>
</feature>
<feature type="binding site" evidence="1">
    <location>
        <position position="189"/>
    </location>
    <ligand>
        <name>Zn(2+)</name>
        <dbReference type="ChEBI" id="CHEBI:29105"/>
        <label>2</label>
    </ligand>
</feature>
<feature type="binding site" evidence="1">
    <location>
        <position position="202"/>
    </location>
    <ligand>
        <name>Zn(2+)</name>
        <dbReference type="ChEBI" id="CHEBI:29105"/>
        <label>1</label>
    </ligand>
</feature>
<feature type="binding site" evidence="1">
    <location>
        <position position="205"/>
    </location>
    <ligand>
        <name>Zn(2+)</name>
        <dbReference type="ChEBI" id="CHEBI:29105"/>
        <label>1</label>
    </ligand>
</feature>
<feature type="modified residue" description="N6-acetyllysine" evidence="3">
    <location>
        <position position="39"/>
    </location>
</feature>
<feature type="modified residue" description="Phosphoserine" evidence="2">
    <location>
        <position position="78"/>
    </location>
</feature>
<feature type="modified residue" description="Phosphoserine" evidence="6">
    <location>
        <position position="123"/>
    </location>
</feature>
<feature type="modified residue" description="N6-acetyllysine" evidence="3">
    <location>
        <position position="152"/>
    </location>
</feature>
<feature type="modified residue" description="Phosphotyrosine" evidence="2">
    <location>
        <position position="391"/>
    </location>
</feature>
<feature type="modified residue" description="Phosphoserine" evidence="2">
    <location>
        <position position="394"/>
    </location>
</feature>
<feature type="modified residue" description="Phosphoserine" evidence="2">
    <location>
        <position position="395"/>
    </location>
</feature>
<feature type="modified residue" description="Cysteine methyl ester" evidence="2">
    <location>
        <position position="409"/>
    </location>
</feature>
<feature type="lipid moiety-binding region" description="S-farnesyl cysteine" evidence="2">
    <location>
        <position position="409"/>
    </location>
</feature>
<feature type="cross-link" description="Glycyl lysine isopeptide (Lys-Gly) (interchain with G-Cter in SUMO2)" evidence="2">
    <location>
        <position position="134"/>
    </location>
</feature>